<sequence>MFRAYGNNGLKNPERISGENPDLYTQTRAAVQQRATTTLKRNEKQKLAVQNDSVFQQVGIGESDSDDDNGGVRIRMSPHRYIDPDDVFTLPEVKKQNALRDAKIAARAAQATAYNTFPSVKSLNGCQDPPETSQQSTSRKRSASNSRSPSRSHSRRYDRDNGRQRSRSREKKRRKKERRRKRSSSRSSSSSRSRDRSSRARDTSSHTLMKMNKPAKYAFLTDEEYRTCDAYISSAFITQTKSDCENYTQGVPKKEIAKCRLSVKFIVGLEHNNILFNNIYGAEYARDKENRPFWEQLDRYLKDVPKETFFRYVPPVGGYWKIRDRVDLLNLDHIDDDVLANDSDNRKDAFTFELEQAKKTFSENVHNIDALIKVISMEEEMCRRNVGSFSSSNPAALAERHQEMVKKAIKADGRNAKLRLMKIELLIKMDPNSPTIIDDFKNLTITFPHEPMVWIKYLDYIQYDSNVYNYKKLKNAFEDCIRQVTGLTNGTLLSHLNAVNDRPLLRMFHLWIYIRYLKWMISCAHTPVVLANIQATFEYNFGLADVEKRTSTNSKEREVRLEEFWESGLPRIGDEGAVGAEKMLKQSEELSDEDIQKLENDDFDILISRTEETIATCLQAQRDVQISWIEVEREMMNIDARVKRTKLKDCELYEDHVDDLETCELWDIIPFDRIRYYEAPGDCANFDFVQPFLELLGVKFLNSTNCFTTTEQIISDWISNDSTVNFYKTPTYTEKKCFEVGNNILKFMLYNRLKLTENNPEYLDKTMVKYLLAMLVTEASEQEKKLNFHSFKLNLKNLVGTFITKHPDIFKRAMLSKITGIVYMEKFVSWWERALKEQEKVVEADERRKNYKEIKMEEGVVDDVKFDVILLKKDKERVQTIRDKIRDMIDIAIPKSTEKLIQSADSSLPTLQLHLYANVLRGRLSILNQNALEETRDVFCKEILGIHTSEFESDEALLLALDQGLNELLEHCKEKDNLESVDSIPELPRAEALCEALKVVAVFVFLDKMAFSRRAVDCLIANAITKFEQFEAKKNDFNRGTYEKYCDQIDLKFITDTLITFFSHKKHRFIYNENFKKLIFQASQAFPCDSKYAKMLGELHSSGRLQVMKLQGFTDSRNSILNAKRDQQFDPELETRLLMNSLTIMFSWMNAANRIGDAGNQILYKNWKREAANTRDPAIWRQVIRVASKLSQKILKDDAYTRARGQCTWALNLHFDYIEAKTVRKNGDLMEMIYLILEQSMGQEHSLFVTDEEYMKTQQEIGLQYSESGR</sequence>
<feature type="chain" id="PRO_0000420972" description="Nuclear exosome regulator NRDE2">
    <location>
        <begin position="1"/>
        <end position="1270"/>
    </location>
</feature>
<feature type="region of interest" description="Disordered" evidence="2">
    <location>
        <begin position="1"/>
        <end position="22"/>
    </location>
</feature>
<feature type="region of interest" description="Disordered" evidence="2">
    <location>
        <begin position="119"/>
        <end position="209"/>
    </location>
</feature>
<feature type="compositionally biased region" description="Polar residues" evidence="2">
    <location>
        <begin position="119"/>
        <end position="135"/>
    </location>
</feature>
<feature type="compositionally biased region" description="Basic residues" evidence="2">
    <location>
        <begin position="164"/>
        <end position="184"/>
    </location>
</feature>
<feature type="compositionally biased region" description="Basic and acidic residues" evidence="2">
    <location>
        <begin position="192"/>
        <end position="204"/>
    </location>
</feature>
<dbReference type="EMBL" id="Z48809">
    <property type="protein sequence ID" value="CAA88749.1"/>
    <property type="molecule type" value="Genomic_DNA"/>
</dbReference>
<dbReference type="EMBL" id="Z48583">
    <property type="protein sequence ID" value="CAA88749.1"/>
    <property type="status" value="JOINED"/>
    <property type="molecule type" value="Genomic_DNA"/>
</dbReference>
<dbReference type="PIR" id="T22615">
    <property type="entry name" value="T22615"/>
</dbReference>
<dbReference type="RefSeq" id="NP_496209.1">
    <property type="nucleotide sequence ID" value="NM_063808.7"/>
</dbReference>
<dbReference type="BioGRID" id="39908">
    <property type="interactions" value="3"/>
</dbReference>
<dbReference type="FunCoup" id="G5EG51">
    <property type="interactions" value="1162"/>
</dbReference>
<dbReference type="IntAct" id="G5EG51">
    <property type="interactions" value="1"/>
</dbReference>
<dbReference type="STRING" id="6239.T01E8.5.1"/>
<dbReference type="PaxDb" id="6239-T01E8.5"/>
<dbReference type="PeptideAtlas" id="G5EG51"/>
<dbReference type="EnsemblMetazoa" id="T01E8.5.1">
    <property type="protein sequence ID" value="T01E8.5.1"/>
    <property type="gene ID" value="WBGene00011333"/>
</dbReference>
<dbReference type="GeneID" id="174589"/>
<dbReference type="KEGG" id="cel:CELE_T01E8.5"/>
<dbReference type="AGR" id="WB:WBGene00011333"/>
<dbReference type="CTD" id="174589"/>
<dbReference type="WormBase" id="T01E8.5">
    <property type="protein sequence ID" value="CE18165"/>
    <property type="gene ID" value="WBGene00011333"/>
    <property type="gene designation" value="nrde-2"/>
</dbReference>
<dbReference type="eggNOG" id="KOG1972">
    <property type="taxonomic scope" value="Eukaryota"/>
</dbReference>
<dbReference type="GeneTree" id="ENSGT00390000005524"/>
<dbReference type="HOGENOM" id="CLU_264027_0_0_1"/>
<dbReference type="InParanoid" id="G5EG51"/>
<dbReference type="OMA" id="YIRYLKW"/>
<dbReference type="OrthoDB" id="5816204at2759"/>
<dbReference type="PRO" id="PR:G5EG51"/>
<dbReference type="Proteomes" id="UP000001940">
    <property type="component" value="Chromosome II"/>
</dbReference>
<dbReference type="Bgee" id="WBGene00011333">
    <property type="expression patterns" value="Expressed in germ line (C elegans) and 4 other cell types or tissues"/>
</dbReference>
<dbReference type="GO" id="GO:0016607">
    <property type="term" value="C:nuclear speck"/>
    <property type="evidence" value="ECO:0000250"/>
    <property type="project" value="UniProtKB"/>
</dbReference>
<dbReference type="GO" id="GO:0005730">
    <property type="term" value="C:nucleolus"/>
    <property type="evidence" value="ECO:0007669"/>
    <property type="project" value="UniProtKB-SubCell"/>
</dbReference>
<dbReference type="GO" id="GO:0005634">
    <property type="term" value="C:nucleus"/>
    <property type="evidence" value="ECO:0000314"/>
    <property type="project" value="UniProtKB"/>
</dbReference>
<dbReference type="GO" id="GO:0048255">
    <property type="term" value="P:mRNA stabilization"/>
    <property type="evidence" value="ECO:0000250"/>
    <property type="project" value="UniProtKB"/>
</dbReference>
<dbReference type="GO" id="GO:1902369">
    <property type="term" value="P:negative regulation of RNA catabolic process"/>
    <property type="evidence" value="ECO:0000318"/>
    <property type="project" value="GO_Central"/>
</dbReference>
<dbReference type="GO" id="GO:0031047">
    <property type="term" value="P:regulatory ncRNA-mediated gene silencing"/>
    <property type="evidence" value="ECO:0000315"/>
    <property type="project" value="UniProtKB"/>
</dbReference>
<dbReference type="GO" id="GO:0031048">
    <property type="term" value="P:regulatory ncRNA-mediated heterochromatin formation"/>
    <property type="evidence" value="ECO:0000315"/>
    <property type="project" value="WormBase"/>
</dbReference>
<dbReference type="GO" id="GO:0035194">
    <property type="term" value="P:regulatory ncRNA-mediated post-transcriptional gene silencing"/>
    <property type="evidence" value="ECO:0000315"/>
    <property type="project" value="WormBase"/>
</dbReference>
<dbReference type="InterPro" id="IPR013633">
    <property type="entry name" value="NRDE-2"/>
</dbReference>
<dbReference type="PANTHER" id="PTHR13471:SF0">
    <property type="entry name" value="NUCLEAR EXOSOME REGULATOR NRDE2"/>
    <property type="match status" value="1"/>
</dbReference>
<dbReference type="PANTHER" id="PTHR13471">
    <property type="entry name" value="TETRATRICOPEPTIDE-LIKE HELICAL"/>
    <property type="match status" value="1"/>
</dbReference>
<dbReference type="Pfam" id="PF08424">
    <property type="entry name" value="NRDE-2"/>
    <property type="match status" value="1"/>
</dbReference>
<proteinExistence type="evidence at protein level"/>
<reference key="1">
    <citation type="journal article" date="1998" name="Science">
        <title>Genome sequence of the nematode C. elegans: a platform for investigating biology.</title>
        <authorList>
            <consortium name="The C. elegans sequencing consortium"/>
        </authorList>
    </citation>
    <scope>NUCLEOTIDE SEQUENCE [LARGE SCALE GENOMIC DNA]</scope>
    <source>
        <strain>Bristol N2</strain>
    </source>
</reference>
<reference key="2">
    <citation type="journal article" date="2010" name="Nature">
        <title>Small regulatory RNAs inhibit RNA polymerase II during the elongation phase of transcription.</title>
        <authorList>
            <person name="Guang S."/>
            <person name="Bochner A.F."/>
            <person name="Burkhart K.B."/>
            <person name="Burton N."/>
            <person name="Pavelec D.M."/>
            <person name="Kennedy S."/>
        </authorList>
    </citation>
    <scope>SUBCELLULAR LOCATION</scope>
    <scope>INTERACTION WITH NRDE-3</scope>
    <scope>FUNCTION</scope>
</reference>
<reference key="3">
    <citation type="journal article" date="2015" name="Curr. Biol.">
        <title>The Nrde pathway mediates small-RNA-directed histone H3 lysine 27 trimethylation in Caenorhabditis elegans.</title>
        <authorList>
            <person name="Mao H."/>
            <person name="Zhu C."/>
            <person name="Zong D."/>
            <person name="Weng C."/>
            <person name="Yang X."/>
            <person name="Huang H."/>
            <person name="Liu D."/>
            <person name="Feng X."/>
            <person name="Guang S."/>
        </authorList>
    </citation>
    <scope>FUNCTION</scope>
</reference>
<reference key="4">
    <citation type="journal article" date="2021" name="Nucleic Acids Res.">
        <title>Antisense ribosomal siRNAs inhibit RNA polymerase I-directed transcription in C. elegans.</title>
        <authorList>
            <person name="Liao S."/>
            <person name="Chen X."/>
            <person name="Xu T."/>
            <person name="Jin Q."/>
            <person name="Xu Z."/>
            <person name="Xu D."/>
            <person name="Zhou X."/>
            <person name="Zhu C."/>
            <person name="Guang S."/>
            <person name="Feng X."/>
        </authorList>
    </citation>
    <scope>FUNCTION</scope>
    <scope>SUBCELLULAR LOCATION</scope>
</reference>
<evidence type="ECO:0000250" key="1">
    <source>
        <dbReference type="UniProtKB" id="Q9H7Z3"/>
    </source>
</evidence>
<evidence type="ECO:0000256" key="2">
    <source>
        <dbReference type="SAM" id="MobiDB-lite"/>
    </source>
</evidence>
<evidence type="ECO:0000269" key="3">
    <source>
    </source>
</evidence>
<evidence type="ECO:0000269" key="4">
    <source>
    </source>
</evidence>
<evidence type="ECO:0000269" key="5">
    <source>
    </source>
</evidence>
<evidence type="ECO:0000305" key="6"/>
<keyword id="KW-0539">Nucleus</keyword>
<keyword id="KW-1185">Reference proteome</keyword>
<keyword id="KW-0943">RNA-mediated gene silencing</keyword>
<protein>
    <recommendedName>
        <fullName evidence="6">Nuclear exosome regulator NRDE2</fullName>
    </recommendedName>
    <alternativeName>
        <fullName>Nuclear RNAi defective-2 protein</fullName>
    </alternativeName>
</protein>
<organism>
    <name type="scientific">Caenorhabditis elegans</name>
    <dbReference type="NCBI Taxonomy" id="6239"/>
    <lineage>
        <taxon>Eukaryota</taxon>
        <taxon>Metazoa</taxon>
        <taxon>Ecdysozoa</taxon>
        <taxon>Nematoda</taxon>
        <taxon>Chromadorea</taxon>
        <taxon>Rhabditida</taxon>
        <taxon>Rhabditina</taxon>
        <taxon>Rhabditomorpha</taxon>
        <taxon>Rhabditoidea</taxon>
        <taxon>Rhabditidae</taxon>
        <taxon>Peloderinae</taxon>
        <taxon>Caenorhabditis</taxon>
    </lineage>
</organism>
<name>NRDE2_CAEEL</name>
<gene>
    <name type="primary">nrde-2</name>
    <name type="ORF">T01E8.5</name>
</gene>
<accession>G5EG51</accession>
<comment type="function">
    <text evidence="1 3 4 5">Protein of the nuclear speckles that regulates RNA exosomal degradation (By similarity). Involved in short interfering RNAs-mediated silencing in nuclei (PubMed:20543824). Functions with nrde-3 in the nuclear RNA-mediated gene silencing (RNAi) pathway to regulate gene expression via inhibition of RNA polymerases I and II during the elongation phase of transcription (PubMed:20543824, PubMed:34365510). Required for exogenous RNAi-induced H3K27 methylation (PubMed:26365259).</text>
</comment>
<comment type="subunit">
    <text evidence="3">Interacts with nrde-3.</text>
</comment>
<comment type="interaction">
    <interactant intactId="EBI-16359048">
        <id>G5EG51</id>
    </interactant>
    <interactant intactId="EBI-2419607">
        <id>Q21691</id>
        <label>nrde-3</label>
    </interactant>
    <organismsDiffer>false</organismsDiffer>
    <experiments>2</experiments>
</comment>
<comment type="subcellular location">
    <subcellularLocation>
        <location evidence="3 5">Nucleus</location>
    </subcellularLocation>
    <subcellularLocation>
        <location evidence="1">Nucleus speckle</location>
    </subcellularLocation>
    <subcellularLocation>
        <location evidence="5">Nucleus</location>
        <location evidence="5">Nucleolus</location>
    </subcellularLocation>
    <text evidence="5">Accumulation of siRNAs promotes translocation of the protein to the nucleolus.</text>
</comment>
<comment type="similarity">
    <text evidence="6">Belongs to the NRDE2 family.</text>
</comment>